<feature type="chain" id="PRO_0000328506" description="Glucose-induced degradation protein 8 homolog">
    <location>
        <begin position="1"/>
        <end position="225"/>
    </location>
</feature>
<feature type="domain" description="LisH" evidence="3">
    <location>
        <begin position="22"/>
        <end position="54"/>
    </location>
</feature>
<feature type="domain" description="CTLH" evidence="2">
    <location>
        <begin position="60"/>
        <end position="117"/>
    </location>
</feature>
<proteinExistence type="inferred from homology"/>
<organism>
    <name type="scientific">Nematostella vectensis</name>
    <name type="common">Starlet sea anemone</name>
    <dbReference type="NCBI Taxonomy" id="45351"/>
    <lineage>
        <taxon>Eukaryota</taxon>
        <taxon>Metazoa</taxon>
        <taxon>Cnidaria</taxon>
        <taxon>Anthozoa</taxon>
        <taxon>Hexacorallia</taxon>
        <taxon>Actiniaria</taxon>
        <taxon>Edwardsiidae</taxon>
        <taxon>Nematostella</taxon>
    </lineage>
</organism>
<accession>A7SWD3</accession>
<name>GID8_NEMVE</name>
<comment type="function">
    <text evidence="1">Core component of the CTLH E3 ubiquitin-protein ligase complex that mediates ubiquitination and subsequent proteasomal degradation of target proteins. Acts as a positive regulator of Wnt signaling pathway by promoting beta-catenin (CTNNB1) nuclear accumulation.</text>
</comment>
<comment type="subcellular location">
    <subcellularLocation>
        <location evidence="1">Cytoplasm</location>
    </subcellularLocation>
    <subcellularLocation>
        <location evidence="1">Nucleus</location>
    </subcellularLocation>
</comment>
<comment type="similarity">
    <text evidence="4">Belongs to the GID8 family.</text>
</comment>
<reference key="1">
    <citation type="journal article" date="2007" name="Science">
        <title>Sea anemone genome reveals ancestral eumetazoan gene repertoire and genomic organization.</title>
        <authorList>
            <person name="Putnam N.H."/>
            <person name="Srivastava M."/>
            <person name="Hellsten U."/>
            <person name="Dirks B."/>
            <person name="Chapman J."/>
            <person name="Salamov A."/>
            <person name="Terry A."/>
            <person name="Shapiro H."/>
            <person name="Lindquist E."/>
            <person name="Kapitonov V.V."/>
            <person name="Jurka J."/>
            <person name="Genikhovich G."/>
            <person name="Grigoriev I.V."/>
            <person name="Lucas S.M."/>
            <person name="Steele R.E."/>
            <person name="Finnerty J.R."/>
            <person name="Technau U."/>
            <person name="Martindale M.Q."/>
            <person name="Rokhsar D.S."/>
        </authorList>
    </citation>
    <scope>NUCLEOTIDE SEQUENCE [LARGE SCALE GENOMIC DNA]</scope>
    <source>
        <strain>CH2 X CH6</strain>
    </source>
</reference>
<keyword id="KW-0963">Cytoplasm</keyword>
<keyword id="KW-0539">Nucleus</keyword>
<keyword id="KW-1185">Reference proteome</keyword>
<keyword id="KW-0879">Wnt signaling pathway</keyword>
<gene>
    <name type="ORF">v1g247787</name>
</gene>
<sequence length="225" mass="25891">MSFAEEVNREEWMEKIGKLRFQRAEMNRLIMDYLVTEGYKEAAEKFRIESGTQPTAPLDSLDDRIKIREAVQKGDLEQAVSMTNKLNPDILDSNQQLYFHLQQQRLIELIREKDIEAAVEFAQGQFSEQGQESGRYLEELEQTMALLAFDNPEESPFGDLLHTSQRQKVASELNAAILEAEHKKTQPKLANVLKLLLWAQDELEGKKVKFPKMAEIASGTFEESR</sequence>
<protein>
    <recommendedName>
        <fullName>Glucose-induced degradation protein 8 homolog</fullName>
    </recommendedName>
</protein>
<evidence type="ECO:0000250" key="1">
    <source>
        <dbReference type="UniProtKB" id="Q9NWU2"/>
    </source>
</evidence>
<evidence type="ECO:0000255" key="2">
    <source>
        <dbReference type="PROSITE-ProRule" id="PRU00058"/>
    </source>
</evidence>
<evidence type="ECO:0000255" key="3">
    <source>
        <dbReference type="PROSITE-ProRule" id="PRU00126"/>
    </source>
</evidence>
<evidence type="ECO:0000305" key="4"/>
<dbReference type="EMBL" id="DS469857">
    <property type="protein sequence ID" value="EDO31993.1"/>
    <property type="molecule type" value="Genomic_DNA"/>
</dbReference>
<dbReference type="RefSeq" id="XP_001624093.1">
    <property type="nucleotide sequence ID" value="XM_001624043.1"/>
</dbReference>
<dbReference type="SMR" id="A7SWD3"/>
<dbReference type="FunCoup" id="A7SWD3">
    <property type="interactions" value="791"/>
</dbReference>
<dbReference type="STRING" id="45351.A7SWD3"/>
<dbReference type="EnsemblMetazoa" id="EDO31993">
    <property type="protein sequence ID" value="EDO31993"/>
    <property type="gene ID" value="NEMVEDRAFT_v1g247787"/>
</dbReference>
<dbReference type="KEGG" id="nve:5502962"/>
<dbReference type="eggNOG" id="KOG2659">
    <property type="taxonomic scope" value="Eukaryota"/>
</dbReference>
<dbReference type="HOGENOM" id="CLU_073203_1_0_1"/>
<dbReference type="InParanoid" id="A7SWD3"/>
<dbReference type="OMA" id="KMILWAQ"/>
<dbReference type="OrthoDB" id="2415936at2759"/>
<dbReference type="PhylomeDB" id="A7SWD3"/>
<dbReference type="Proteomes" id="UP000001593">
    <property type="component" value="Unassembled WGS sequence"/>
</dbReference>
<dbReference type="GO" id="GO:0005737">
    <property type="term" value="C:cytoplasm"/>
    <property type="evidence" value="ECO:0000318"/>
    <property type="project" value="GO_Central"/>
</dbReference>
<dbReference type="GO" id="GO:0005634">
    <property type="term" value="C:nucleus"/>
    <property type="evidence" value="ECO:0000318"/>
    <property type="project" value="GO_Central"/>
</dbReference>
<dbReference type="GO" id="GO:0043161">
    <property type="term" value="P:proteasome-mediated ubiquitin-dependent protein catabolic process"/>
    <property type="evidence" value="ECO:0000318"/>
    <property type="project" value="GO_Central"/>
</dbReference>
<dbReference type="GO" id="GO:0016055">
    <property type="term" value="P:Wnt signaling pathway"/>
    <property type="evidence" value="ECO:0007669"/>
    <property type="project" value="UniProtKB-KW"/>
</dbReference>
<dbReference type="InterPro" id="IPR013144">
    <property type="entry name" value="CRA_dom"/>
</dbReference>
<dbReference type="InterPro" id="IPR024964">
    <property type="entry name" value="CTLH/CRA"/>
</dbReference>
<dbReference type="InterPro" id="IPR006595">
    <property type="entry name" value="CTLH_C"/>
</dbReference>
<dbReference type="InterPro" id="IPR006594">
    <property type="entry name" value="LisH"/>
</dbReference>
<dbReference type="InterPro" id="IPR050618">
    <property type="entry name" value="Ubq-SigPath_Reg"/>
</dbReference>
<dbReference type="PANTHER" id="PTHR12864">
    <property type="entry name" value="RAN BINDING PROTEIN 9-RELATED"/>
    <property type="match status" value="1"/>
</dbReference>
<dbReference type="Pfam" id="PF10607">
    <property type="entry name" value="CTLH"/>
    <property type="match status" value="1"/>
</dbReference>
<dbReference type="Pfam" id="PF08513">
    <property type="entry name" value="LisH"/>
    <property type="match status" value="1"/>
</dbReference>
<dbReference type="SMART" id="SM00757">
    <property type="entry name" value="CRA"/>
    <property type="match status" value="1"/>
</dbReference>
<dbReference type="SMART" id="SM00668">
    <property type="entry name" value="CTLH"/>
    <property type="match status" value="1"/>
</dbReference>
<dbReference type="SMART" id="SM00667">
    <property type="entry name" value="LisH"/>
    <property type="match status" value="1"/>
</dbReference>
<dbReference type="PROSITE" id="PS50897">
    <property type="entry name" value="CTLH"/>
    <property type="match status" value="1"/>
</dbReference>
<dbReference type="PROSITE" id="PS50896">
    <property type="entry name" value="LISH"/>
    <property type="match status" value="1"/>
</dbReference>